<evidence type="ECO:0000255" key="1">
    <source>
        <dbReference type="HAMAP-Rule" id="MF_00120"/>
    </source>
</evidence>
<comment type="function">
    <text evidence="1">Allows the formation of correctly charged Gln-tRNA(Gln) through the transamidation of misacylated Glu-tRNA(Gln) in organisms which lack glutaminyl-tRNA synthetase. The reaction takes place in the presence of glutamine and ATP through an activated gamma-phospho-Glu-tRNA(Gln).</text>
</comment>
<comment type="catalytic activity">
    <reaction evidence="1">
        <text>L-glutamyl-tRNA(Gln) + L-glutamine + ATP + H2O = L-glutaminyl-tRNA(Gln) + L-glutamate + ADP + phosphate + H(+)</text>
        <dbReference type="Rhea" id="RHEA:17521"/>
        <dbReference type="Rhea" id="RHEA-COMP:9681"/>
        <dbReference type="Rhea" id="RHEA-COMP:9684"/>
        <dbReference type="ChEBI" id="CHEBI:15377"/>
        <dbReference type="ChEBI" id="CHEBI:15378"/>
        <dbReference type="ChEBI" id="CHEBI:29985"/>
        <dbReference type="ChEBI" id="CHEBI:30616"/>
        <dbReference type="ChEBI" id="CHEBI:43474"/>
        <dbReference type="ChEBI" id="CHEBI:58359"/>
        <dbReference type="ChEBI" id="CHEBI:78520"/>
        <dbReference type="ChEBI" id="CHEBI:78521"/>
        <dbReference type="ChEBI" id="CHEBI:456216"/>
        <dbReference type="EC" id="6.3.5.7"/>
    </reaction>
</comment>
<comment type="subunit">
    <text evidence="1">Heterotrimer of A, B and C subunits.</text>
</comment>
<comment type="similarity">
    <text evidence="1">Belongs to the amidase family. GatA subfamily.</text>
</comment>
<organism>
    <name type="scientific">Geobacter sp. (strain M21)</name>
    <dbReference type="NCBI Taxonomy" id="443144"/>
    <lineage>
        <taxon>Bacteria</taxon>
        <taxon>Pseudomonadati</taxon>
        <taxon>Thermodesulfobacteriota</taxon>
        <taxon>Desulfuromonadia</taxon>
        <taxon>Geobacterales</taxon>
        <taxon>Geobacteraceae</taxon>
        <taxon>Geobacter</taxon>
    </lineage>
</organism>
<dbReference type="EC" id="6.3.5.7" evidence="1"/>
<dbReference type="EMBL" id="CP001661">
    <property type="protein sequence ID" value="ACT19770.1"/>
    <property type="molecule type" value="Genomic_DNA"/>
</dbReference>
<dbReference type="SMR" id="C6E6Z2"/>
<dbReference type="STRING" id="443144.GM21_3751"/>
<dbReference type="KEGG" id="gem:GM21_3751"/>
<dbReference type="eggNOG" id="COG0154">
    <property type="taxonomic scope" value="Bacteria"/>
</dbReference>
<dbReference type="HOGENOM" id="CLU_009600_0_3_7"/>
<dbReference type="OrthoDB" id="9811471at2"/>
<dbReference type="GO" id="GO:0030956">
    <property type="term" value="C:glutamyl-tRNA(Gln) amidotransferase complex"/>
    <property type="evidence" value="ECO:0007669"/>
    <property type="project" value="InterPro"/>
</dbReference>
<dbReference type="GO" id="GO:0005524">
    <property type="term" value="F:ATP binding"/>
    <property type="evidence" value="ECO:0007669"/>
    <property type="project" value="UniProtKB-KW"/>
</dbReference>
<dbReference type="GO" id="GO:0050567">
    <property type="term" value="F:glutaminyl-tRNA synthase (glutamine-hydrolyzing) activity"/>
    <property type="evidence" value="ECO:0007669"/>
    <property type="project" value="UniProtKB-UniRule"/>
</dbReference>
<dbReference type="GO" id="GO:0006412">
    <property type="term" value="P:translation"/>
    <property type="evidence" value="ECO:0007669"/>
    <property type="project" value="UniProtKB-UniRule"/>
</dbReference>
<dbReference type="Gene3D" id="3.90.1300.10">
    <property type="entry name" value="Amidase signature (AS) domain"/>
    <property type="match status" value="1"/>
</dbReference>
<dbReference type="HAMAP" id="MF_00120">
    <property type="entry name" value="GatA"/>
    <property type="match status" value="1"/>
</dbReference>
<dbReference type="InterPro" id="IPR000120">
    <property type="entry name" value="Amidase"/>
</dbReference>
<dbReference type="InterPro" id="IPR020556">
    <property type="entry name" value="Amidase_CS"/>
</dbReference>
<dbReference type="InterPro" id="IPR023631">
    <property type="entry name" value="Amidase_dom"/>
</dbReference>
<dbReference type="InterPro" id="IPR036928">
    <property type="entry name" value="AS_sf"/>
</dbReference>
<dbReference type="InterPro" id="IPR004412">
    <property type="entry name" value="GatA"/>
</dbReference>
<dbReference type="NCBIfam" id="TIGR00132">
    <property type="entry name" value="gatA"/>
    <property type="match status" value="1"/>
</dbReference>
<dbReference type="PANTHER" id="PTHR11895:SF151">
    <property type="entry name" value="GLUTAMYL-TRNA(GLN) AMIDOTRANSFERASE SUBUNIT A"/>
    <property type="match status" value="1"/>
</dbReference>
<dbReference type="PANTHER" id="PTHR11895">
    <property type="entry name" value="TRANSAMIDASE"/>
    <property type="match status" value="1"/>
</dbReference>
<dbReference type="Pfam" id="PF01425">
    <property type="entry name" value="Amidase"/>
    <property type="match status" value="1"/>
</dbReference>
<dbReference type="SUPFAM" id="SSF75304">
    <property type="entry name" value="Amidase signature (AS) enzymes"/>
    <property type="match status" value="1"/>
</dbReference>
<dbReference type="PROSITE" id="PS00571">
    <property type="entry name" value="AMIDASES"/>
    <property type="match status" value="1"/>
</dbReference>
<keyword id="KW-0067">ATP-binding</keyword>
<keyword id="KW-0436">Ligase</keyword>
<keyword id="KW-0547">Nucleotide-binding</keyword>
<keyword id="KW-0648">Protein biosynthesis</keyword>
<sequence>MEIFDLTIHELHEKLKAKEVSSVEATRAMLDRIEAVDSQVNAYITVTPEQALVQAQDADRRIAAGEIAPLTGVPVGLKDIFVTKGIRTTCGSRILENFVPPYDGTAVAKLKEQGAVIVGKLNQDEFAMGSSNESSYFGPCRNPWDLSCTPGGSSGGSAAAIAARTATATLGTDTGGSIRQPASHCGCVGLKPTYGRVSRYGVIAYASSLDQVGPLTRDVTDSALLLGAVAGYDPMDSTSVNTPVPDYVAGLGKGVKGMKIGLPKQYFIEGLDPDVKRAMDEAIALYKSLGADIREVSLPNTEYAVATYYIIATAEASANLARYDGVRFGHRAENARGLAQMYSKSRAEGFGPEVKRRIMLGTYALSSGYYDAYYVKAQKVRTLIQQDFLNAFKEVDVLLTPIAPTPAFKIAEKLEDPLQMYLSDIFTIPVNLAGTCGISVPAGFSAAGLPIGLQLVGKPFGEQEILTAAYSFERETQWHLKKAPL</sequence>
<protein>
    <recommendedName>
        <fullName evidence="1">Glutamyl-tRNA(Gln) amidotransferase subunit A</fullName>
        <shortName evidence="1">Glu-ADT subunit A</shortName>
        <ecNumber evidence="1">6.3.5.7</ecNumber>
    </recommendedName>
</protein>
<feature type="chain" id="PRO_1000203037" description="Glutamyl-tRNA(Gln) amidotransferase subunit A">
    <location>
        <begin position="1"/>
        <end position="485"/>
    </location>
</feature>
<feature type="active site" description="Charge relay system" evidence="1">
    <location>
        <position position="78"/>
    </location>
</feature>
<feature type="active site" description="Charge relay system" evidence="1">
    <location>
        <position position="153"/>
    </location>
</feature>
<feature type="active site" description="Acyl-ester intermediate" evidence="1">
    <location>
        <position position="177"/>
    </location>
</feature>
<reference key="1">
    <citation type="submission" date="2009-07" db="EMBL/GenBank/DDBJ databases">
        <title>Complete sequence of Geobacter sp. M21.</title>
        <authorList>
            <consortium name="US DOE Joint Genome Institute"/>
            <person name="Lucas S."/>
            <person name="Copeland A."/>
            <person name="Lapidus A."/>
            <person name="Glavina del Rio T."/>
            <person name="Dalin E."/>
            <person name="Tice H."/>
            <person name="Bruce D."/>
            <person name="Goodwin L."/>
            <person name="Pitluck S."/>
            <person name="Saunders E."/>
            <person name="Brettin T."/>
            <person name="Detter J.C."/>
            <person name="Han C."/>
            <person name="Larimer F."/>
            <person name="Land M."/>
            <person name="Hauser L."/>
            <person name="Kyrpides N."/>
            <person name="Ovchinnikova G."/>
            <person name="Lovley D."/>
        </authorList>
    </citation>
    <scope>NUCLEOTIDE SEQUENCE [LARGE SCALE GENOMIC DNA]</scope>
    <source>
        <strain>M21</strain>
    </source>
</reference>
<proteinExistence type="inferred from homology"/>
<gene>
    <name evidence="1" type="primary">gatA</name>
    <name type="ordered locus">GM21_3751</name>
</gene>
<name>GATA_GEOSM</name>
<accession>C6E6Z2</accession>